<feature type="transit peptide" description="Chloroplast" evidence="1">
    <location>
        <begin position="1" status="less than"/>
        <end position="33"/>
    </location>
</feature>
<feature type="chain" id="PRO_0000011170" description="Glucose-1-phosphate adenylyltransferase large subunit, chloroplastic/amyloplastic">
    <location>
        <begin position="34"/>
        <end position="500"/>
    </location>
</feature>
<feature type="region of interest" description="Disordered" evidence="2">
    <location>
        <begin position="1"/>
        <end position="47"/>
    </location>
</feature>
<feature type="non-terminal residue">
    <location>
        <position position="1"/>
    </location>
</feature>
<proteinExistence type="evidence at transcript level"/>
<sequence length="500" mass="55560">RASPPSESRAPLRAPQRSATRQHQARQGPRRMCNGGRGPPYWTAGVTSAPARQTPLFSGRPSGGLSDPNEVAAVILGGGTGTQLFPLTSTRATPAVPIGGCYRLIDIPMSNCFNSGINKIFVMTQFNSASLNRHIHRTYLGGGINFTDGSVEVLAATQMPGEAAGWFRGTADAWRKIIWVLEDYYKNKSIEHILILSGDQLYRMDYMELVQKHVDDNADITLSCAPVGESRASEYGLVKFDSSGRVVQFSEQPKGDDLEAMKVDTSFLNFAIDDPAKYPYIASMGVYVFKRDVLLNLLKSRYAELHDFGSEILPRALHDHNVQAYVFTDYWEDIGTIRSFFDANRALCEQPPKFEFYDPKTPFFTSPRYLPPTKSDKCRIKEAIILHGCFLRECKIEHTAFSRLNSGSELKNAMMMGADSYETEDEMSRLMSEGKVPIGVGENTKISNCIIDMNARIGRDVVISNKEGVQEADRPEEGYYIRSGIVVIQKNATIKDGTVV</sequence>
<dbReference type="EC" id="2.7.7.27"/>
<dbReference type="EMBL" id="X14350">
    <property type="protein sequence ID" value="CAA32533.1"/>
    <property type="molecule type" value="mRNA"/>
</dbReference>
<dbReference type="PIR" id="S05077">
    <property type="entry name" value="S05077"/>
</dbReference>
<dbReference type="SMR" id="P12300"/>
<dbReference type="STRING" id="4565.P12300"/>
<dbReference type="UniPathway" id="UPA00152"/>
<dbReference type="Proteomes" id="UP000019116">
    <property type="component" value="Unplaced"/>
</dbReference>
<dbReference type="ExpressionAtlas" id="P12300">
    <property type="expression patterns" value="baseline and differential"/>
</dbReference>
<dbReference type="GO" id="GO:0009501">
    <property type="term" value="C:amyloplast"/>
    <property type="evidence" value="ECO:0007669"/>
    <property type="project" value="UniProtKB-SubCell"/>
</dbReference>
<dbReference type="GO" id="GO:0009507">
    <property type="term" value="C:chloroplast"/>
    <property type="evidence" value="ECO:0007669"/>
    <property type="project" value="UniProtKB-SubCell"/>
</dbReference>
<dbReference type="GO" id="GO:0005524">
    <property type="term" value="F:ATP binding"/>
    <property type="evidence" value="ECO:0007669"/>
    <property type="project" value="UniProtKB-KW"/>
</dbReference>
<dbReference type="GO" id="GO:0008878">
    <property type="term" value="F:glucose-1-phosphate adenylyltransferase activity"/>
    <property type="evidence" value="ECO:0007669"/>
    <property type="project" value="UniProtKB-EC"/>
</dbReference>
<dbReference type="GO" id="GO:0005978">
    <property type="term" value="P:glycogen biosynthetic process"/>
    <property type="evidence" value="ECO:0007669"/>
    <property type="project" value="InterPro"/>
</dbReference>
<dbReference type="GO" id="GO:0019252">
    <property type="term" value="P:starch biosynthetic process"/>
    <property type="evidence" value="ECO:0007669"/>
    <property type="project" value="UniProtKB-UniPathway"/>
</dbReference>
<dbReference type="CDD" id="cd02508">
    <property type="entry name" value="ADP_Glucose_PP"/>
    <property type="match status" value="1"/>
</dbReference>
<dbReference type="CDD" id="cd04651">
    <property type="entry name" value="LbH_G1P_AT_C"/>
    <property type="match status" value="1"/>
</dbReference>
<dbReference type="Gene3D" id="2.160.10.10">
    <property type="entry name" value="Hexapeptide repeat proteins"/>
    <property type="match status" value="1"/>
</dbReference>
<dbReference type="Gene3D" id="3.90.550.10">
    <property type="entry name" value="Spore Coat Polysaccharide Biosynthesis Protein SpsA, Chain A"/>
    <property type="match status" value="1"/>
</dbReference>
<dbReference type="InterPro" id="IPR011831">
    <property type="entry name" value="ADP-Glc_PPase"/>
</dbReference>
<dbReference type="InterPro" id="IPR005836">
    <property type="entry name" value="ADP_Glu_pyroP_CS"/>
</dbReference>
<dbReference type="InterPro" id="IPR005835">
    <property type="entry name" value="NTP_transferase_dom"/>
</dbReference>
<dbReference type="InterPro" id="IPR029044">
    <property type="entry name" value="Nucleotide-diphossugar_trans"/>
</dbReference>
<dbReference type="InterPro" id="IPR011004">
    <property type="entry name" value="Trimer_LpxA-like_sf"/>
</dbReference>
<dbReference type="NCBIfam" id="NF002772">
    <property type="entry name" value="PRK02862.1"/>
    <property type="match status" value="1"/>
</dbReference>
<dbReference type="PANTHER" id="PTHR43523:SF12">
    <property type="entry name" value="GLUCOSE-1-PHOSPHATE ADENYLYLTRANSFERASE LARGE SUBUNIT 1, CHLOROPLASTIC-RELATED"/>
    <property type="match status" value="1"/>
</dbReference>
<dbReference type="PANTHER" id="PTHR43523">
    <property type="entry name" value="GLUCOSE-1-PHOSPHATE ADENYLYLTRANSFERASE-RELATED"/>
    <property type="match status" value="1"/>
</dbReference>
<dbReference type="Pfam" id="PF25247">
    <property type="entry name" value="LbH_GLGC"/>
    <property type="match status" value="1"/>
</dbReference>
<dbReference type="Pfam" id="PF00483">
    <property type="entry name" value="NTP_transferase"/>
    <property type="match status" value="1"/>
</dbReference>
<dbReference type="SUPFAM" id="SSF53448">
    <property type="entry name" value="Nucleotide-diphospho-sugar transferases"/>
    <property type="match status" value="1"/>
</dbReference>
<dbReference type="SUPFAM" id="SSF51161">
    <property type="entry name" value="Trimeric LpxA-like enzymes"/>
    <property type="match status" value="1"/>
</dbReference>
<dbReference type="PROSITE" id="PS00808">
    <property type="entry name" value="ADP_GLC_PYROPHOSPH_1"/>
    <property type="match status" value="1"/>
</dbReference>
<dbReference type="PROSITE" id="PS00809">
    <property type="entry name" value="ADP_GLC_PYROPHOSPH_2"/>
    <property type="match status" value="1"/>
</dbReference>
<dbReference type="PROSITE" id="PS00810">
    <property type="entry name" value="ADP_GLC_PYROPHOSPH_3"/>
    <property type="match status" value="1"/>
</dbReference>
<evidence type="ECO:0000255" key="1"/>
<evidence type="ECO:0000256" key="2">
    <source>
        <dbReference type="SAM" id="MobiDB-lite"/>
    </source>
</evidence>
<evidence type="ECO:0000305" key="3"/>
<name>GLGL3_WHEAT</name>
<reference key="1">
    <citation type="journal article" date="1989" name="Plant Mol. Biol.">
        <title>Isolation and nucleotide sequences of cDNA clones encoding ADP-glucose pyrophosphorylase polypeptides from wheat leaf and endosperm.</title>
        <authorList>
            <person name="Olive M.R."/>
            <person name="Ellis R.J."/>
            <person name="Schuch W.W."/>
        </authorList>
    </citation>
    <scope>NUCLEOTIDE SEQUENCE [MRNA]</scope>
    <source>
        <strain>cv. Mardler</strain>
        <tissue>Endosperm</tissue>
    </source>
</reference>
<protein>
    <recommendedName>
        <fullName>Glucose-1-phosphate adenylyltransferase large subunit, chloroplastic/amyloplastic</fullName>
        <ecNumber>2.7.7.27</ecNumber>
    </recommendedName>
    <alternativeName>
        <fullName>ADP-glucose pyrophosphorylase</fullName>
    </alternativeName>
    <alternativeName>
        <fullName>ADP-glucose synthase</fullName>
    </alternativeName>
    <alternativeName>
        <fullName>AGPase S</fullName>
    </alternativeName>
    <alternativeName>
        <fullName>Alpha-D-glucose-1-phosphate adenyl transferase</fullName>
    </alternativeName>
</protein>
<keyword id="KW-0021">Allosteric enzyme</keyword>
<keyword id="KW-0035">Amyloplast</keyword>
<keyword id="KW-0067">ATP-binding</keyword>
<keyword id="KW-0150">Chloroplast</keyword>
<keyword id="KW-0547">Nucleotide-binding</keyword>
<keyword id="KW-0548">Nucleotidyltransferase</keyword>
<keyword id="KW-0934">Plastid</keyword>
<keyword id="KW-1185">Reference proteome</keyword>
<keyword id="KW-0750">Starch biosynthesis</keyword>
<keyword id="KW-0808">Transferase</keyword>
<keyword id="KW-0809">Transit peptide</keyword>
<organism>
    <name type="scientific">Triticum aestivum</name>
    <name type="common">Wheat</name>
    <dbReference type="NCBI Taxonomy" id="4565"/>
    <lineage>
        <taxon>Eukaryota</taxon>
        <taxon>Viridiplantae</taxon>
        <taxon>Streptophyta</taxon>
        <taxon>Embryophyta</taxon>
        <taxon>Tracheophyta</taxon>
        <taxon>Spermatophyta</taxon>
        <taxon>Magnoliopsida</taxon>
        <taxon>Liliopsida</taxon>
        <taxon>Poales</taxon>
        <taxon>Poaceae</taxon>
        <taxon>BOP clade</taxon>
        <taxon>Pooideae</taxon>
        <taxon>Triticodae</taxon>
        <taxon>Triticeae</taxon>
        <taxon>Triticinae</taxon>
        <taxon>Triticum</taxon>
    </lineage>
</organism>
<accession>P12300</accession>
<comment type="function">
    <text>This protein plays a role in synthesis of starch. It catalyzes the synthesis of the activated glycosyl donor, ADP-glucose from Glc-1-P and ATP.</text>
</comment>
<comment type="catalytic activity">
    <reaction>
        <text>alpha-D-glucose 1-phosphate + ATP + H(+) = ADP-alpha-D-glucose + diphosphate</text>
        <dbReference type="Rhea" id="RHEA:12120"/>
        <dbReference type="ChEBI" id="CHEBI:15378"/>
        <dbReference type="ChEBI" id="CHEBI:30616"/>
        <dbReference type="ChEBI" id="CHEBI:33019"/>
        <dbReference type="ChEBI" id="CHEBI:57498"/>
        <dbReference type="ChEBI" id="CHEBI:58601"/>
        <dbReference type="EC" id="2.7.7.27"/>
    </reaction>
</comment>
<comment type="activity regulation">
    <text>Insensitive to 3'phosphoglycerate and orthophosphate.</text>
</comment>
<comment type="pathway">
    <text>Glycan biosynthesis; starch biosynthesis.</text>
</comment>
<comment type="subunit">
    <text>Heterotetramer.</text>
</comment>
<comment type="subcellular location">
    <subcellularLocation>
        <location>Plastid</location>
        <location>Chloroplast</location>
    </subcellularLocation>
    <subcellularLocation>
        <location>Plastid</location>
        <location>Amyloplast</location>
    </subcellularLocation>
    <text>Found in the chloroplast in leaf. Found in the plastid in the developing endosperm.</text>
</comment>
<comment type="similarity">
    <text evidence="3">Belongs to the bacterial/plant glucose-1-phosphate adenylyltransferase family.</text>
</comment>
<gene>
    <name type="primary">AGA.7</name>
</gene>